<organism>
    <name type="scientific">Yersinia pseudotuberculosis serotype I (strain IP32953)</name>
    <dbReference type="NCBI Taxonomy" id="273123"/>
    <lineage>
        <taxon>Bacteria</taxon>
        <taxon>Pseudomonadati</taxon>
        <taxon>Pseudomonadota</taxon>
        <taxon>Gammaproteobacteria</taxon>
        <taxon>Enterobacterales</taxon>
        <taxon>Yersiniaceae</taxon>
        <taxon>Yersinia</taxon>
    </lineage>
</organism>
<comment type="catalytic activity">
    <reaction evidence="1">
        <text>agmatine + H2O = N-carbamoylputrescine + NH4(+)</text>
        <dbReference type="Rhea" id="RHEA:18037"/>
        <dbReference type="ChEBI" id="CHEBI:15377"/>
        <dbReference type="ChEBI" id="CHEBI:28938"/>
        <dbReference type="ChEBI" id="CHEBI:58145"/>
        <dbReference type="ChEBI" id="CHEBI:58318"/>
        <dbReference type="EC" id="3.5.3.12"/>
    </reaction>
</comment>
<comment type="similarity">
    <text evidence="1">Belongs to the agmatine deiminase family.</text>
</comment>
<comment type="sequence caution" evidence="2">
    <conflict type="erroneous initiation">
        <sequence resource="EMBL-CDS" id="CAH22449"/>
    </conflict>
</comment>
<sequence>MLQQQALPGTPRQDGFFMPAEWAPQDAVWMLWPYRQDNWRGKAIPAQQTFAKVAEAISRATPVFMGVPAEFMAQAKATMPANVTLVEMASDDAWMRDTGPTMVINGAAERRAVDWQFNAWGGLNGGLYADWQQDEKVAVQVSDFLKNAHYSAPLILEGGSIHTDGEGTLLTTAECLLNPNRNPHLNQAQIEQLLCDYLGVTHFIWLQDGVYNDETDGHIDNMCCFVRPGEVALHWTDDQQDPQYARSVAAFEVLSNTVDAKGRKLKIWKLPAPGPLYNTEEETFDVLTSDAVPRTAGERLAGSYVNFLISNQQIIFPLLDSRTDGQANDLLQQMFPGYAIVGVPAREILLGGGNIHCITQQIPAA</sequence>
<evidence type="ECO:0000255" key="1">
    <source>
        <dbReference type="HAMAP-Rule" id="MF_01841"/>
    </source>
</evidence>
<evidence type="ECO:0000305" key="2"/>
<name>AGUA_YERPS</name>
<feature type="chain" id="PRO_0000194349" description="Putative agmatine deiminase">
    <location>
        <begin position="1"/>
        <end position="365"/>
    </location>
</feature>
<feature type="active site" description="Amidino-cysteine intermediate" evidence="1">
    <location>
        <position position="357"/>
    </location>
</feature>
<dbReference type="EC" id="3.5.3.12" evidence="1"/>
<dbReference type="EMBL" id="BX936398">
    <property type="protein sequence ID" value="CAH22449.1"/>
    <property type="status" value="ALT_INIT"/>
    <property type="molecule type" value="Genomic_DNA"/>
</dbReference>
<dbReference type="SMR" id="Q666N7"/>
<dbReference type="KEGG" id="yps:YPTB3211"/>
<dbReference type="Proteomes" id="UP000001011">
    <property type="component" value="Chromosome"/>
</dbReference>
<dbReference type="GO" id="GO:0047632">
    <property type="term" value="F:agmatine deiminase activity"/>
    <property type="evidence" value="ECO:0007669"/>
    <property type="project" value="UniProtKB-UniRule"/>
</dbReference>
<dbReference type="GO" id="GO:0004668">
    <property type="term" value="F:protein-arginine deiminase activity"/>
    <property type="evidence" value="ECO:0007669"/>
    <property type="project" value="InterPro"/>
</dbReference>
<dbReference type="GO" id="GO:0009446">
    <property type="term" value="P:putrescine biosynthetic process"/>
    <property type="evidence" value="ECO:0007669"/>
    <property type="project" value="InterPro"/>
</dbReference>
<dbReference type="Gene3D" id="3.75.10.10">
    <property type="entry name" value="L-arginine/glycine Amidinotransferase, Chain A"/>
    <property type="match status" value="1"/>
</dbReference>
<dbReference type="HAMAP" id="MF_01841">
    <property type="entry name" value="Agmatine_deimin"/>
    <property type="match status" value="1"/>
</dbReference>
<dbReference type="InterPro" id="IPR017754">
    <property type="entry name" value="Agmatine_deiminase"/>
</dbReference>
<dbReference type="InterPro" id="IPR007466">
    <property type="entry name" value="Peptidyl-Arg-deiminase_porph"/>
</dbReference>
<dbReference type="NCBIfam" id="TIGR03380">
    <property type="entry name" value="agmatine_aguA"/>
    <property type="match status" value="1"/>
</dbReference>
<dbReference type="NCBIfam" id="NF010070">
    <property type="entry name" value="PRK13551.1"/>
    <property type="match status" value="1"/>
</dbReference>
<dbReference type="PANTHER" id="PTHR31377">
    <property type="entry name" value="AGMATINE DEIMINASE-RELATED"/>
    <property type="match status" value="1"/>
</dbReference>
<dbReference type="PANTHER" id="PTHR31377:SF0">
    <property type="entry name" value="AGMATINE DEIMINASE-RELATED"/>
    <property type="match status" value="1"/>
</dbReference>
<dbReference type="Pfam" id="PF04371">
    <property type="entry name" value="PAD_porph"/>
    <property type="match status" value="1"/>
</dbReference>
<dbReference type="SUPFAM" id="SSF55909">
    <property type="entry name" value="Pentein"/>
    <property type="match status" value="1"/>
</dbReference>
<reference key="1">
    <citation type="journal article" date="2004" name="Proc. Natl. Acad. Sci. U.S.A.">
        <title>Insights into the evolution of Yersinia pestis through whole-genome comparison with Yersinia pseudotuberculosis.</title>
        <authorList>
            <person name="Chain P.S.G."/>
            <person name="Carniel E."/>
            <person name="Larimer F.W."/>
            <person name="Lamerdin J."/>
            <person name="Stoutland P.O."/>
            <person name="Regala W.M."/>
            <person name="Georgescu A.M."/>
            <person name="Vergez L.M."/>
            <person name="Land M.L."/>
            <person name="Motin V.L."/>
            <person name="Brubaker R.R."/>
            <person name="Fowler J."/>
            <person name="Hinnebusch J."/>
            <person name="Marceau M."/>
            <person name="Medigue C."/>
            <person name="Simonet M."/>
            <person name="Chenal-Francisque V."/>
            <person name="Souza B."/>
            <person name="Dacheux D."/>
            <person name="Elliott J.M."/>
            <person name="Derbise A."/>
            <person name="Hauser L.J."/>
            <person name="Garcia E."/>
        </authorList>
    </citation>
    <scope>NUCLEOTIDE SEQUENCE [LARGE SCALE GENOMIC DNA]</scope>
    <source>
        <strain>IP32953</strain>
    </source>
</reference>
<proteinExistence type="inferred from homology"/>
<protein>
    <recommendedName>
        <fullName evidence="1">Putative agmatine deiminase</fullName>
        <ecNumber evidence="1">3.5.3.12</ecNumber>
    </recommendedName>
    <alternativeName>
        <fullName evidence="1">Agmatine iminohydrolase</fullName>
    </alternativeName>
</protein>
<keyword id="KW-0378">Hydrolase</keyword>
<accession>Q666N7</accession>
<gene>
    <name evidence="1" type="primary">aguA</name>
    <name type="ordered locus">YPTB3211</name>
</gene>